<reference key="1">
    <citation type="journal article" date="2000" name="J. Bacteriol.">
        <title>Defects in D-alanyl-lipoteichoic acid synthesis in Streptococcus mutans results in acid sensitivity.</title>
        <authorList>
            <person name="Boyd D.A."/>
            <person name="Cvitkovitch D.G."/>
            <person name="Bleiweis A.S."/>
            <person name="Kiriukhin M.Y."/>
            <person name="Debabov D.V."/>
            <person name="Neuhaus F.C."/>
            <person name="Hamilton I.R."/>
        </authorList>
    </citation>
    <scope>NUCLEOTIDE SEQUENCE [GENOMIC DNA]</scope>
    <source>
        <strain>LT11</strain>
    </source>
</reference>
<reference key="2">
    <citation type="journal article" date="2000" name="Infect. Immun.">
        <title>Characterization of the Streptococcus mutans pyruvate formate-lyase (PFL)-activating enzyme gene by complementary reconstitution of the in vitro PFL-reactivating system.</title>
        <authorList>
            <person name="Yamamoto Y."/>
            <person name="Sato Y."/>
            <person name="Takahashi-Abbe S."/>
            <person name="Takahashi N."/>
            <person name="Kizaki H."/>
        </authorList>
    </citation>
    <scope>NUCLEOTIDE SEQUENCE [GENOMIC DNA]</scope>
    <source>
        <strain>GS-5</strain>
    </source>
</reference>
<reference key="3">
    <citation type="journal article" date="2002" name="Proc. Natl. Acad. Sci. U.S.A.">
        <title>Genome sequence of Streptococcus mutans UA159, a cariogenic dental pathogen.</title>
        <authorList>
            <person name="Ajdic D.J."/>
            <person name="McShan W.M."/>
            <person name="McLaughlin R.E."/>
            <person name="Savic G."/>
            <person name="Chang J."/>
            <person name="Carson M.B."/>
            <person name="Primeaux C."/>
            <person name="Tian R."/>
            <person name="Kenton S."/>
            <person name="Jia H.G."/>
            <person name="Lin S.P."/>
            <person name="Qian Y."/>
            <person name="Li S."/>
            <person name="Zhu H."/>
            <person name="Najar F.Z."/>
            <person name="Lai H."/>
            <person name="White J."/>
            <person name="Roe B.A."/>
            <person name="Ferretti J.J."/>
        </authorList>
    </citation>
    <scope>NUCLEOTIDE SEQUENCE [LARGE SCALE GENOMIC DNA]</scope>
    <source>
        <strain>ATCC 700610 / UA159</strain>
    </source>
</reference>
<protein>
    <recommendedName>
        <fullName>Pyruvate formate-lyase-activating enzyme</fullName>
        <shortName>PFL-activating enzyme</shortName>
        <ecNumber>1.97.1.4</ecNumber>
    </recommendedName>
    <alternativeName>
        <fullName>Formate-C-acetyltransferase-activating enzyme</fullName>
    </alternativeName>
</protein>
<name>PFLA_STRMU</name>
<feature type="chain" id="PRO_0000200533" description="Pyruvate formate-lyase-activating enzyme">
    <location>
        <begin position="1"/>
        <end position="263"/>
    </location>
</feature>
<feature type="domain" description="Radical SAM core" evidence="3">
    <location>
        <begin position="23"/>
        <end position="260"/>
    </location>
</feature>
<feature type="binding site" evidence="2">
    <location>
        <position position="37"/>
    </location>
    <ligand>
        <name>[4Fe-4S] cluster</name>
        <dbReference type="ChEBI" id="CHEBI:49883"/>
        <note>4Fe-4S-S-AdoMet</note>
    </ligand>
</feature>
<feature type="binding site" evidence="2">
    <location>
        <position position="41"/>
    </location>
    <ligand>
        <name>[4Fe-4S] cluster</name>
        <dbReference type="ChEBI" id="CHEBI:49883"/>
        <note>4Fe-4S-S-AdoMet</note>
    </ligand>
</feature>
<feature type="binding site" evidence="2">
    <location>
        <begin position="43"/>
        <end position="45"/>
    </location>
    <ligand>
        <name>S-adenosyl-L-methionine</name>
        <dbReference type="ChEBI" id="CHEBI:59789"/>
    </ligand>
</feature>
<feature type="binding site" evidence="2">
    <location>
        <position position="44"/>
    </location>
    <ligand>
        <name>[4Fe-4S] cluster</name>
        <dbReference type="ChEBI" id="CHEBI:49883"/>
        <note>4Fe-4S-S-AdoMet</note>
    </ligand>
</feature>
<feature type="binding site" evidence="2">
    <location>
        <position position="87"/>
    </location>
    <ligand>
        <name>S-adenosyl-L-methionine</name>
        <dbReference type="ChEBI" id="CHEBI:59789"/>
    </ligand>
</feature>
<feature type="binding site" evidence="2">
    <location>
        <begin position="142"/>
        <end position="144"/>
    </location>
    <ligand>
        <name>S-adenosyl-L-methionine</name>
        <dbReference type="ChEBI" id="CHEBI:59789"/>
    </ligand>
</feature>
<feature type="binding site" evidence="2">
    <location>
        <position position="215"/>
    </location>
    <ligand>
        <name>S-adenosyl-L-methionine</name>
        <dbReference type="ChEBI" id="CHEBI:59789"/>
    </ligand>
</feature>
<sequence>MIEKVDYEKVTGLVNSTESFGSVDGPGIRFVVFMQGCQMRCQYCHNPDTWAMKNDRATERTAGDVFKEALRFKDFWGDTGGITVSGGEATLQMDFLIALFSLAKEKGIHTTLDTCALTFRNTPKYLEKYEKLMAVTDLVLLDIKEINPDQHKIVTGHSNKTILACARYLSDIGKPVWIRHVLVPGLTDRDEDLIKLGEYVKTLKNVQRFEILPYHTMGEFKWRELGIPYPLEGVKPPTPDRVRNAKKLMHTETYEEYKKRINH</sequence>
<gene>
    <name type="primary">act</name>
    <name type="synonym">pflA</name>
    <name type="synonym">pflC</name>
    <name type="ordered locus">SMU_1692</name>
</gene>
<evidence type="ECO:0000250" key="1"/>
<evidence type="ECO:0000250" key="2">
    <source>
        <dbReference type="UniProtKB" id="P0A9N4"/>
    </source>
</evidence>
<evidence type="ECO:0000255" key="3">
    <source>
        <dbReference type="PROSITE-ProRule" id="PRU01266"/>
    </source>
</evidence>
<evidence type="ECO:0000305" key="4"/>
<accession>O68575</accession>
<proteinExistence type="inferred from homology"/>
<dbReference type="EC" id="1.97.1.4"/>
<dbReference type="EMBL" id="AF051356">
    <property type="protein sequence ID" value="AAC05773.1"/>
    <property type="molecule type" value="Genomic_DNA"/>
</dbReference>
<dbReference type="EMBL" id="AB018417">
    <property type="protein sequence ID" value="BAA34998.1"/>
    <property type="molecule type" value="Genomic_DNA"/>
</dbReference>
<dbReference type="EMBL" id="AE014133">
    <property type="protein sequence ID" value="AAN59329.1"/>
    <property type="molecule type" value="Genomic_DNA"/>
</dbReference>
<dbReference type="RefSeq" id="NP_722023.1">
    <property type="nucleotide sequence ID" value="NC_004350.2"/>
</dbReference>
<dbReference type="RefSeq" id="WP_002262580.1">
    <property type="nucleotide sequence ID" value="NC_004350.2"/>
</dbReference>
<dbReference type="SMR" id="O68575"/>
<dbReference type="STRING" id="210007.SMU_1692"/>
<dbReference type="DNASU" id="1028925"/>
<dbReference type="GeneID" id="93858884"/>
<dbReference type="KEGG" id="smu:SMU_1692"/>
<dbReference type="PATRIC" id="fig|210007.7.peg.1512"/>
<dbReference type="eggNOG" id="COG1180">
    <property type="taxonomic scope" value="Bacteria"/>
</dbReference>
<dbReference type="HOGENOM" id="CLU_058969_1_1_9"/>
<dbReference type="OrthoDB" id="9782387at2"/>
<dbReference type="PhylomeDB" id="O68575"/>
<dbReference type="Proteomes" id="UP000002512">
    <property type="component" value="Chromosome"/>
</dbReference>
<dbReference type="GO" id="GO:0005737">
    <property type="term" value="C:cytoplasm"/>
    <property type="evidence" value="ECO:0007669"/>
    <property type="project" value="UniProtKB-SubCell"/>
</dbReference>
<dbReference type="GO" id="GO:0051539">
    <property type="term" value="F:4 iron, 4 sulfur cluster binding"/>
    <property type="evidence" value="ECO:0007669"/>
    <property type="project" value="UniProtKB-KW"/>
</dbReference>
<dbReference type="GO" id="GO:0043365">
    <property type="term" value="F:[formate-C-acetyltransferase]-activating enzyme activity"/>
    <property type="evidence" value="ECO:0007669"/>
    <property type="project" value="UniProtKB-EC"/>
</dbReference>
<dbReference type="GO" id="GO:0046872">
    <property type="term" value="F:metal ion binding"/>
    <property type="evidence" value="ECO:0007669"/>
    <property type="project" value="UniProtKB-KW"/>
</dbReference>
<dbReference type="CDD" id="cd01335">
    <property type="entry name" value="Radical_SAM"/>
    <property type="match status" value="1"/>
</dbReference>
<dbReference type="Gene3D" id="3.20.20.70">
    <property type="entry name" value="Aldolase class I"/>
    <property type="match status" value="1"/>
</dbReference>
<dbReference type="InterPro" id="IPR013785">
    <property type="entry name" value="Aldolase_TIM"/>
</dbReference>
<dbReference type="InterPro" id="IPR034457">
    <property type="entry name" value="Organic_radical-activating"/>
</dbReference>
<dbReference type="InterPro" id="IPR012839">
    <property type="entry name" value="Organic_radical_activase"/>
</dbReference>
<dbReference type="InterPro" id="IPR012838">
    <property type="entry name" value="PFL1_activating"/>
</dbReference>
<dbReference type="InterPro" id="IPR034465">
    <property type="entry name" value="Pyruvate_for-lyase_activase"/>
</dbReference>
<dbReference type="InterPro" id="IPR001989">
    <property type="entry name" value="Radical_activat_CS"/>
</dbReference>
<dbReference type="InterPro" id="IPR007197">
    <property type="entry name" value="rSAM"/>
</dbReference>
<dbReference type="NCBIfam" id="TIGR02493">
    <property type="entry name" value="PFLA"/>
    <property type="match status" value="1"/>
</dbReference>
<dbReference type="PANTHER" id="PTHR30352:SF5">
    <property type="entry name" value="PYRUVATE FORMATE-LYASE 1-ACTIVATING ENZYME"/>
    <property type="match status" value="1"/>
</dbReference>
<dbReference type="PANTHER" id="PTHR30352">
    <property type="entry name" value="PYRUVATE FORMATE-LYASE-ACTIVATING ENZYME"/>
    <property type="match status" value="1"/>
</dbReference>
<dbReference type="Pfam" id="PF13353">
    <property type="entry name" value="Fer4_12"/>
    <property type="match status" value="1"/>
</dbReference>
<dbReference type="Pfam" id="PF04055">
    <property type="entry name" value="Radical_SAM"/>
    <property type="match status" value="1"/>
</dbReference>
<dbReference type="PIRSF" id="PIRSF000371">
    <property type="entry name" value="PFL_act_enz"/>
    <property type="match status" value="1"/>
</dbReference>
<dbReference type="SFLD" id="SFLDG01066">
    <property type="entry name" value="organic_radical-activating_enz"/>
    <property type="match status" value="1"/>
</dbReference>
<dbReference type="SFLD" id="SFLDF00278">
    <property type="entry name" value="pyruvate_formate-lyase_activas"/>
    <property type="match status" value="1"/>
</dbReference>
<dbReference type="SUPFAM" id="SSF102114">
    <property type="entry name" value="Radical SAM enzymes"/>
    <property type="match status" value="1"/>
</dbReference>
<dbReference type="PROSITE" id="PS01087">
    <property type="entry name" value="RADICAL_ACTIVATING"/>
    <property type="match status" value="1"/>
</dbReference>
<dbReference type="PROSITE" id="PS51918">
    <property type="entry name" value="RADICAL_SAM"/>
    <property type="match status" value="1"/>
</dbReference>
<organism>
    <name type="scientific">Streptococcus mutans serotype c (strain ATCC 700610 / UA159)</name>
    <dbReference type="NCBI Taxonomy" id="210007"/>
    <lineage>
        <taxon>Bacteria</taxon>
        <taxon>Bacillati</taxon>
        <taxon>Bacillota</taxon>
        <taxon>Bacilli</taxon>
        <taxon>Lactobacillales</taxon>
        <taxon>Streptococcaceae</taxon>
        <taxon>Streptococcus</taxon>
    </lineage>
</organism>
<keyword id="KW-0004">4Fe-4S</keyword>
<keyword id="KW-0963">Cytoplasm</keyword>
<keyword id="KW-0408">Iron</keyword>
<keyword id="KW-0411">Iron-sulfur</keyword>
<keyword id="KW-0479">Metal-binding</keyword>
<keyword id="KW-0560">Oxidoreductase</keyword>
<keyword id="KW-1185">Reference proteome</keyword>
<keyword id="KW-0949">S-adenosyl-L-methionine</keyword>
<comment type="function">
    <text>Activation of pyruvate formate-lyase under anaerobic conditions by generation of an organic free radical, using S-adenosylmethionine and reduced flavodoxin as cosubstrates to produce 5'-deoxy-adenosine.</text>
</comment>
<comment type="catalytic activity">
    <reaction>
        <text>glycyl-[formate C-acetyltransferase] + reduced [flavodoxin] + S-adenosyl-L-methionine = glycin-2-yl radical-[formate C-acetyltransferase] + semiquinone [flavodoxin] + 5'-deoxyadenosine + L-methionine + H(+)</text>
        <dbReference type="Rhea" id="RHEA:19225"/>
        <dbReference type="Rhea" id="RHEA-COMP:10622"/>
        <dbReference type="Rhea" id="RHEA-COMP:12190"/>
        <dbReference type="Rhea" id="RHEA-COMP:12191"/>
        <dbReference type="Rhea" id="RHEA-COMP:14480"/>
        <dbReference type="ChEBI" id="CHEBI:15378"/>
        <dbReference type="ChEBI" id="CHEBI:17319"/>
        <dbReference type="ChEBI" id="CHEBI:29947"/>
        <dbReference type="ChEBI" id="CHEBI:32722"/>
        <dbReference type="ChEBI" id="CHEBI:57618"/>
        <dbReference type="ChEBI" id="CHEBI:57844"/>
        <dbReference type="ChEBI" id="CHEBI:59789"/>
        <dbReference type="ChEBI" id="CHEBI:140311"/>
        <dbReference type="EC" id="1.97.1.4"/>
    </reaction>
</comment>
<comment type="cofactor">
    <cofactor evidence="1">
        <name>[4Fe-4S] cluster</name>
        <dbReference type="ChEBI" id="CHEBI:49883"/>
    </cofactor>
    <text evidence="1">Binds 1 [4Fe-4S] cluster. The cluster is coordinated with 3 cysteines and an exchangeable S-adenosyl-L-methionine.</text>
</comment>
<comment type="subcellular location">
    <subcellularLocation>
        <location>Cytoplasm</location>
    </subcellularLocation>
</comment>
<comment type="similarity">
    <text evidence="4">Belongs to the organic radical-activating enzymes family.</text>
</comment>